<reference key="1">
    <citation type="journal article" date="2000" name="Plant Physiol.">
        <title>The Arabidopsis HKT1 gene homolog mediates inward Na(+) currents in Xenopus laevis oocytes and Na(+) uptake in Saccharomyces cerevisiae.</title>
        <authorList>
            <person name="Uozumi N."/>
            <person name="Kim E.J."/>
            <person name="Rubio F."/>
            <person name="Yamaguchi T."/>
            <person name="Muto S."/>
            <person name="Tsuboi A."/>
            <person name="Bakker E.P."/>
            <person name="Nakamura T."/>
            <person name="Schroeder J.I."/>
        </authorList>
    </citation>
    <scope>NUCLEOTIDE SEQUENCE [MRNA]</scope>
    <scope>FUNCTION</scope>
    <scope>TISSUE SPECIFICITY</scope>
    <source>
        <strain>cv. Landsberg erecta</strain>
    </source>
</reference>
<reference key="2">
    <citation type="submission" date="2004-07" db="EMBL/GenBank/DDBJ databases">
        <authorList>
            <person name="Zhang J.L."/>
            <person name="Wang D."/>
            <person name="Zhang J.W."/>
        </authorList>
    </citation>
    <scope>NUCLEOTIDE SEQUENCE [MRNA]</scope>
</reference>
<reference key="3">
    <citation type="journal article" date="1999" name="Nature">
        <title>Sequence and analysis of chromosome 4 of the plant Arabidopsis thaliana.</title>
        <authorList>
            <person name="Mayer K.F.X."/>
            <person name="Schueller C."/>
            <person name="Wambutt R."/>
            <person name="Murphy G."/>
            <person name="Volckaert G."/>
            <person name="Pohl T."/>
            <person name="Duesterhoeft A."/>
            <person name="Stiekema W."/>
            <person name="Entian K.-D."/>
            <person name="Terryn N."/>
            <person name="Harris B."/>
            <person name="Ansorge W."/>
            <person name="Brandt P."/>
            <person name="Grivell L.A."/>
            <person name="Rieger M."/>
            <person name="Weichselgartner M."/>
            <person name="de Simone V."/>
            <person name="Obermaier B."/>
            <person name="Mache R."/>
            <person name="Mueller M."/>
            <person name="Kreis M."/>
            <person name="Delseny M."/>
            <person name="Puigdomenech P."/>
            <person name="Watson M."/>
            <person name="Schmidtheini T."/>
            <person name="Reichert B."/>
            <person name="Portetelle D."/>
            <person name="Perez-Alonso M."/>
            <person name="Boutry M."/>
            <person name="Bancroft I."/>
            <person name="Vos P."/>
            <person name="Hoheisel J."/>
            <person name="Zimmermann W."/>
            <person name="Wedler H."/>
            <person name="Ridley P."/>
            <person name="Langham S.-A."/>
            <person name="McCullagh B."/>
            <person name="Bilham L."/>
            <person name="Robben J."/>
            <person name="van der Schueren J."/>
            <person name="Grymonprez B."/>
            <person name="Chuang Y.-J."/>
            <person name="Vandenbussche F."/>
            <person name="Braeken M."/>
            <person name="Weltjens I."/>
            <person name="Voet M."/>
            <person name="Bastiaens I."/>
            <person name="Aert R."/>
            <person name="Defoor E."/>
            <person name="Weitzenegger T."/>
            <person name="Bothe G."/>
            <person name="Ramsperger U."/>
            <person name="Hilbert H."/>
            <person name="Braun M."/>
            <person name="Holzer E."/>
            <person name="Brandt A."/>
            <person name="Peters S."/>
            <person name="van Staveren M."/>
            <person name="Dirkse W."/>
            <person name="Mooijman P."/>
            <person name="Klein Lankhorst R."/>
            <person name="Rose M."/>
            <person name="Hauf J."/>
            <person name="Koetter P."/>
            <person name="Berneiser S."/>
            <person name="Hempel S."/>
            <person name="Feldpausch M."/>
            <person name="Lamberth S."/>
            <person name="Van den Daele H."/>
            <person name="De Keyser A."/>
            <person name="Buysshaert C."/>
            <person name="Gielen J."/>
            <person name="Villarroel R."/>
            <person name="De Clercq R."/>
            <person name="van Montagu M."/>
            <person name="Rogers J."/>
            <person name="Cronin A."/>
            <person name="Quail M.A."/>
            <person name="Bray-Allen S."/>
            <person name="Clark L."/>
            <person name="Doggett J."/>
            <person name="Hall S."/>
            <person name="Kay M."/>
            <person name="Lennard N."/>
            <person name="McLay K."/>
            <person name="Mayes R."/>
            <person name="Pettett A."/>
            <person name="Rajandream M.A."/>
            <person name="Lyne M."/>
            <person name="Benes V."/>
            <person name="Rechmann S."/>
            <person name="Borkova D."/>
            <person name="Bloecker H."/>
            <person name="Scharfe M."/>
            <person name="Grimm M."/>
            <person name="Loehnert T.-H."/>
            <person name="Dose S."/>
            <person name="de Haan M."/>
            <person name="Maarse A.C."/>
            <person name="Schaefer M."/>
            <person name="Mueller-Auer S."/>
            <person name="Gabel C."/>
            <person name="Fuchs M."/>
            <person name="Fartmann B."/>
            <person name="Granderath K."/>
            <person name="Dauner D."/>
            <person name="Herzl A."/>
            <person name="Neumann S."/>
            <person name="Argiriou A."/>
            <person name="Vitale D."/>
            <person name="Liguori R."/>
            <person name="Piravandi E."/>
            <person name="Massenet O."/>
            <person name="Quigley F."/>
            <person name="Clabauld G."/>
            <person name="Muendlein A."/>
            <person name="Felber R."/>
            <person name="Schnabl S."/>
            <person name="Hiller R."/>
            <person name="Schmidt W."/>
            <person name="Lecharny A."/>
            <person name="Aubourg S."/>
            <person name="Chefdor F."/>
            <person name="Cooke R."/>
            <person name="Berger C."/>
            <person name="Monfort A."/>
            <person name="Casacuberta E."/>
            <person name="Gibbons T."/>
            <person name="Weber N."/>
            <person name="Vandenbol M."/>
            <person name="Bargues M."/>
            <person name="Terol J."/>
            <person name="Torres A."/>
            <person name="Perez-Perez A."/>
            <person name="Purnelle B."/>
            <person name="Bent E."/>
            <person name="Johnson S."/>
            <person name="Tacon D."/>
            <person name="Jesse T."/>
            <person name="Heijnen L."/>
            <person name="Schwarz S."/>
            <person name="Scholler P."/>
            <person name="Heber S."/>
            <person name="Francs P."/>
            <person name="Bielke C."/>
            <person name="Frishman D."/>
            <person name="Haase D."/>
            <person name="Lemcke K."/>
            <person name="Mewes H.-W."/>
            <person name="Stocker S."/>
            <person name="Zaccaria P."/>
            <person name="Bevan M."/>
            <person name="Wilson R.K."/>
            <person name="de la Bastide M."/>
            <person name="Habermann K."/>
            <person name="Parnell L."/>
            <person name="Dedhia N."/>
            <person name="Gnoj L."/>
            <person name="Schutz K."/>
            <person name="Huang E."/>
            <person name="Spiegel L."/>
            <person name="Sekhon M."/>
            <person name="Murray J."/>
            <person name="Sheet P."/>
            <person name="Cordes M."/>
            <person name="Abu-Threideh J."/>
            <person name="Stoneking T."/>
            <person name="Kalicki J."/>
            <person name="Graves T."/>
            <person name="Harmon G."/>
            <person name="Edwards J."/>
            <person name="Latreille P."/>
            <person name="Courtney L."/>
            <person name="Cloud J."/>
            <person name="Abbott A."/>
            <person name="Scott K."/>
            <person name="Johnson D."/>
            <person name="Minx P."/>
            <person name="Bentley D."/>
            <person name="Fulton B."/>
            <person name="Miller N."/>
            <person name="Greco T."/>
            <person name="Kemp K."/>
            <person name="Kramer J."/>
            <person name="Fulton L."/>
            <person name="Mardis E."/>
            <person name="Dante M."/>
            <person name="Pepin K."/>
            <person name="Hillier L.W."/>
            <person name="Nelson J."/>
            <person name="Spieth J."/>
            <person name="Ryan E."/>
            <person name="Andrews S."/>
            <person name="Geisel C."/>
            <person name="Layman D."/>
            <person name="Du H."/>
            <person name="Ali J."/>
            <person name="Berghoff A."/>
            <person name="Jones K."/>
            <person name="Drone K."/>
            <person name="Cotton M."/>
            <person name="Joshu C."/>
            <person name="Antonoiu B."/>
            <person name="Zidanic M."/>
            <person name="Strong C."/>
            <person name="Sun H."/>
            <person name="Lamar B."/>
            <person name="Yordan C."/>
            <person name="Ma P."/>
            <person name="Zhong J."/>
            <person name="Preston R."/>
            <person name="Vil D."/>
            <person name="Shekher M."/>
            <person name="Matero A."/>
            <person name="Shah R."/>
            <person name="Swaby I.K."/>
            <person name="O'Shaughnessy A."/>
            <person name="Rodriguez M."/>
            <person name="Hoffman J."/>
            <person name="Till S."/>
            <person name="Granat S."/>
            <person name="Shohdy N."/>
            <person name="Hasegawa A."/>
            <person name="Hameed A."/>
            <person name="Lodhi M."/>
            <person name="Johnson A."/>
            <person name="Chen E."/>
            <person name="Marra M.A."/>
            <person name="Martienssen R."/>
            <person name="McCombie W.R."/>
        </authorList>
    </citation>
    <scope>NUCLEOTIDE SEQUENCE [LARGE SCALE GENOMIC DNA]</scope>
    <source>
        <strain>cv. Columbia</strain>
    </source>
</reference>
<reference key="4">
    <citation type="journal article" date="2017" name="Plant J.">
        <title>Araport11: a complete reannotation of the Arabidopsis thaliana reference genome.</title>
        <authorList>
            <person name="Cheng C.Y."/>
            <person name="Krishnakumar V."/>
            <person name="Chan A.P."/>
            <person name="Thibaud-Nissen F."/>
            <person name="Schobel S."/>
            <person name="Town C.D."/>
        </authorList>
    </citation>
    <scope>GENOME REANNOTATION</scope>
    <source>
        <strain>cv. Columbia</strain>
    </source>
</reference>
<reference key="5">
    <citation type="journal article" date="2003" name="Science">
        <title>Empirical analysis of transcriptional activity in the Arabidopsis genome.</title>
        <authorList>
            <person name="Yamada K."/>
            <person name="Lim J."/>
            <person name="Dale J.M."/>
            <person name="Chen H."/>
            <person name="Shinn P."/>
            <person name="Palm C.J."/>
            <person name="Southwick A.M."/>
            <person name="Wu H.C."/>
            <person name="Kim C.J."/>
            <person name="Nguyen M."/>
            <person name="Pham P.K."/>
            <person name="Cheuk R.F."/>
            <person name="Karlin-Newmann G."/>
            <person name="Liu S.X."/>
            <person name="Lam B."/>
            <person name="Sakano H."/>
            <person name="Wu T."/>
            <person name="Yu G."/>
            <person name="Miranda M."/>
            <person name="Quach H.L."/>
            <person name="Tripp M."/>
            <person name="Chang C.H."/>
            <person name="Lee J.M."/>
            <person name="Toriumi M.J."/>
            <person name="Chan M.M."/>
            <person name="Tang C.C."/>
            <person name="Onodera C.S."/>
            <person name="Deng J.M."/>
            <person name="Akiyama K."/>
            <person name="Ansari Y."/>
            <person name="Arakawa T."/>
            <person name="Banh J."/>
            <person name="Banno F."/>
            <person name="Bowser L."/>
            <person name="Brooks S.Y."/>
            <person name="Carninci P."/>
            <person name="Chao Q."/>
            <person name="Choy N."/>
            <person name="Enju A."/>
            <person name="Goldsmith A.D."/>
            <person name="Gurjal M."/>
            <person name="Hansen N.F."/>
            <person name="Hayashizaki Y."/>
            <person name="Johnson-Hopson C."/>
            <person name="Hsuan V.W."/>
            <person name="Iida K."/>
            <person name="Karnes M."/>
            <person name="Khan S."/>
            <person name="Koesema E."/>
            <person name="Ishida J."/>
            <person name="Jiang P.X."/>
            <person name="Jones T."/>
            <person name="Kawai J."/>
            <person name="Kamiya A."/>
            <person name="Meyers C."/>
            <person name="Nakajima M."/>
            <person name="Narusaka M."/>
            <person name="Seki M."/>
            <person name="Sakurai T."/>
            <person name="Satou M."/>
            <person name="Tamse R."/>
            <person name="Vaysberg M."/>
            <person name="Wallender E.K."/>
            <person name="Wong C."/>
            <person name="Yamamura Y."/>
            <person name="Yuan S."/>
            <person name="Shinozaki K."/>
            <person name="Davis R.W."/>
            <person name="Theologis A."/>
            <person name="Ecker J.R."/>
        </authorList>
    </citation>
    <scope>NUCLEOTIDE SEQUENCE [LARGE SCALE MRNA]</scope>
    <source>
        <strain>cv. Columbia</strain>
    </source>
</reference>
<reference key="6">
    <citation type="journal article" date="2001" name="Proc. Natl. Acad. Sci. U.S.A.">
        <title>Evidence in support of a four transmembrane-pore-transmembrane topology model for the Arabidopsis thaliana Na+/K+ translocating AtHKT1 protein, a member of the superfamily of K+ transporters.</title>
        <authorList>
            <person name="Kato Y."/>
            <person name="Sakaguchi M."/>
            <person name="Mori Y."/>
            <person name="Saito K."/>
            <person name="Nakamura T."/>
            <person name="Bakker E.P."/>
            <person name="Sato Y."/>
            <person name="Goshima S."/>
            <person name="Uozumi N."/>
        </authorList>
    </citation>
    <scope>TOPOLOGY</scope>
    <scope>GLYCOSYLATION AT ASN-429</scope>
    <scope>MUTAGENESIS OF GLU-194; GLY-213; ASN-429 AND PHE-443</scope>
</reference>
<reference key="7">
    <citation type="journal article" date="2001" name="Proc. Natl. Acad. Sci. U.S.A.">
        <title>AtHKT1 is a salt tolerance determinant that controls Na(+) entry into plant roots.</title>
        <authorList>
            <person name="Rus A."/>
            <person name="Yokoi S."/>
            <person name="Sharkhuu A."/>
            <person name="Reddy M."/>
            <person name="Lee B.-H."/>
            <person name="Matsumoto T.K."/>
            <person name="Koiwa H."/>
            <person name="Zhu J.-K."/>
            <person name="Bressan R.A."/>
            <person name="Hasegawa P.M."/>
        </authorList>
    </citation>
    <scope>FUNCTION</scope>
</reference>
<reference key="8">
    <citation type="journal article" date="2002" name="Proc. Natl. Acad. Sci. U.S.A.">
        <title>Glycine residues in potassium channel-like selectivity filters determine potassium selectivity in four-loop-per-subunit HKT transporters from plants.</title>
        <authorList>
            <person name="Maeser P."/>
            <person name="Hosoo Y."/>
            <person name="Goshima S."/>
            <person name="Horie T."/>
            <person name="Eckelman B."/>
            <person name="Yamada K."/>
            <person name="Yoshida K."/>
            <person name="Bakker E.P."/>
            <person name="Shinmyo A."/>
            <person name="Oiki S."/>
            <person name="Schroeder J.I."/>
            <person name="Uozumi N."/>
        </authorList>
    </citation>
    <scope>FUNCTION</scope>
    <scope>MUTAGENESIS OF SER-68</scope>
</reference>
<reference key="9">
    <citation type="journal article" date="2002" name="FEBS Lett.">
        <title>Altered shoot/root Na+ distribution and bifurcating salt sensitivity in Arabidopsis by genetic disruption of the Na+ transporter AtHKT1.</title>
        <authorList>
            <person name="Maeser P."/>
            <person name="Eckelman B."/>
            <person name="Vaidyanathan R."/>
            <person name="Horie T."/>
            <person name="Fairbairn D.J."/>
            <person name="Kubo M."/>
            <person name="Yamagami M."/>
            <person name="Yamaguchi K."/>
            <person name="Nishimura M."/>
            <person name="Uozumi N."/>
            <person name="Robertson W."/>
            <person name="Sussman M.R."/>
            <person name="Schroeder J.I."/>
        </authorList>
    </citation>
    <scope>FUNCTION</scope>
</reference>
<reference key="10">
    <citation type="journal article" date="2003" name="EMBO J.">
        <title>Functional analysis of AtHKT1 in Arabidopsis shows that Na(+) recirculation by the phloem is crucial for salt tolerance.</title>
        <authorList>
            <person name="Berthomieu P."/>
            <person name="Conejero G."/>
            <person name="Nublat A."/>
            <person name="Brackenbury W.J."/>
            <person name="Lambert C."/>
            <person name="Savio C."/>
            <person name="Uozumi N."/>
            <person name="Oiki S."/>
            <person name="Yamada K."/>
            <person name="Cellier F."/>
            <person name="Gosti F."/>
            <person name="Simonneau T."/>
            <person name="Essah P.A."/>
            <person name="Tester M."/>
            <person name="Very A.-A."/>
            <person name="Sentenac H."/>
            <person name="Casse F."/>
        </authorList>
    </citation>
    <scope>FUNCTION</scope>
    <scope>TISSUE SPECIFICITY</scope>
    <scope>MUTAGENESIS OF SER-282 AND GLY-325</scope>
</reference>
<reference key="11">
    <citation type="journal article" date="2004" name="Plant Physiol.">
        <title>AtHKT1 facilitates Na+ homeostasis and K+ nutrition in planta.</title>
        <authorList>
            <person name="Rus A."/>
            <person name="Lee B.-H."/>
            <person name="Munoz-Mayor A."/>
            <person name="Sharkhuu A."/>
            <person name="Miura K."/>
            <person name="Zhu J.-K."/>
            <person name="Bressan R.A."/>
            <person name="Hasegawa P.M."/>
        </authorList>
    </citation>
    <scope>FUNCTION</scope>
</reference>
<reference key="12">
    <citation type="journal article" date="2004" name="Proc. Natl. Acad. Sci. U.S.A.">
        <title>Microarray-based rapid cloning of an ion accumulation deletion mutant in Arabidopsis thaliana.</title>
        <authorList>
            <person name="Gong J.-M."/>
            <person name="Waner D.A."/>
            <person name="Horie T."/>
            <person name="Li S.L."/>
            <person name="Horie R."/>
            <person name="Abid K.B."/>
            <person name="Schroeder J.I."/>
        </authorList>
    </citation>
    <scope>FUNCTION</scope>
</reference>
<gene>
    <name type="primary">HKT1</name>
    <name type="ordered locus">At4g10310</name>
    <name type="ORF">T9A4.5</name>
</gene>
<evidence type="ECO:0000255" key="1"/>
<evidence type="ECO:0000269" key="2">
    <source>
    </source>
</evidence>
<evidence type="ECO:0000269" key="3">
    <source>
    </source>
</evidence>
<evidence type="ECO:0000269" key="4">
    <source>
    </source>
</evidence>
<evidence type="ECO:0000269" key="5">
    <source>
    </source>
</evidence>
<evidence type="ECO:0000269" key="6">
    <source>
    </source>
</evidence>
<evidence type="ECO:0000269" key="7">
    <source>
    </source>
</evidence>
<evidence type="ECO:0000269" key="8">
    <source>
    </source>
</evidence>
<evidence type="ECO:0000269" key="9">
    <source>
    </source>
</evidence>
<evidence type="ECO:0000305" key="10"/>
<evidence type="ECO:0007829" key="11">
    <source>
        <dbReference type="PDB" id="8W9N"/>
    </source>
</evidence>
<organism>
    <name type="scientific">Arabidopsis thaliana</name>
    <name type="common">Mouse-ear cress</name>
    <dbReference type="NCBI Taxonomy" id="3702"/>
    <lineage>
        <taxon>Eukaryota</taxon>
        <taxon>Viridiplantae</taxon>
        <taxon>Streptophyta</taxon>
        <taxon>Embryophyta</taxon>
        <taxon>Tracheophyta</taxon>
        <taxon>Spermatophyta</taxon>
        <taxon>Magnoliopsida</taxon>
        <taxon>eudicotyledons</taxon>
        <taxon>Gunneridae</taxon>
        <taxon>Pentapetalae</taxon>
        <taxon>rosids</taxon>
        <taxon>malvids</taxon>
        <taxon>Brassicales</taxon>
        <taxon>Brassicaceae</taxon>
        <taxon>Camelineae</taxon>
        <taxon>Arabidopsis</taxon>
    </lineage>
</organism>
<sequence>MDRVVAKIAKIRSQLTKLRSLFFLYFIYFLFFSFLGFLALKITKPRTTSRPHDFDLFFTSVSAITVSSMSTVDMEVFSNTQLIFLTILMFLGGEIFTSFLNLYVSYFTKFVFPHNKIRHILGSYNSDSSIEDRCDVETVTDYREGLIKIDERASKCLYSVVLSYHLVTNLVGSVLLLVYVNFVKTARDVLSSKEISPLTFSVFTTVSTFANCGFVPTNENMIIFRKNSGLIWLLIPQVLMGNTLFPCFLVLLIWGLYKITKRDEYGYILKNHNKMGYSHLLSVRLCVLLGVTVLGFLIIQLLFFCAFEWTSESLEGMSSYEKLVGSLFQVVNSRHTGETIVDLSTLSPAILVLFILMMYLPPYTLFMPLTEQKTIEKEGGDDDSENGKKVKKSGLIVSQLSFLTICIFLISITERQNLQRDPINFNVLNITLEVISAYGNVGFTTGYSCERRVDISDGGCKDASYGFAGRWSPMGKFVLIIVMFYGRFKQFTAKSGRAWILYPSSS</sequence>
<comment type="function">
    <text evidence="2 4 5 6 7 8 9">Sodium transporter protein, which plays a central role in plant tolerance to salt. Upon prolongated exposure to high concentrations, Na(+) translocates from the roots to the transpiring leaves where it can increase to toxic level. Involved in Na(+) recirculation from shoots to roots, probably by mediating Na(+) loading into the phloem sap in shoots and unloading in roots, thereby removing large amounts of Na(+) from the shoot. Does not transport K(+) but regulates K(+) nutrient status via its ability to facilitate Na(+) homeostasis. Probably not involved in root uptake of Na(+).</text>
</comment>
<comment type="catalytic activity">
    <reaction evidence="2 5">
        <text>Na(+)(in) = Na(+)(out)</text>
        <dbReference type="Rhea" id="RHEA:34963"/>
        <dbReference type="ChEBI" id="CHEBI:29101"/>
    </reaction>
</comment>
<comment type="subcellular location">
    <subcellularLocation>
        <location>Cell membrane</location>
        <topology>Multi-pass membrane protein</topology>
    </subcellularLocation>
</comment>
<comment type="tissue specificity">
    <text evidence="2 7">Highly expressed in roots. Expressed in flowers, leaves and stems. Expressed in the vascular tissues of every organs. In roots, leaves and flower peduncles, it is only expressed in the phloem tissues. Not expressed in root peripheral cells.</text>
</comment>
<comment type="PTM">
    <text evidence="3">N-glycosylated. Not essential for functional expression and membrane targeting.</text>
</comment>
<comment type="miscellaneous">
    <text>In contrast to K(+) channel proteins, it lacks a conserved Gly at position 68, explaining why it does not act as a K(+) transporter.</text>
</comment>
<comment type="similarity">
    <text evidence="10">Belongs to the TrkH potassium transport family. HKT (TC 2.A.38.3) subfamily.</text>
</comment>
<comment type="sequence caution" evidence="10">
    <conflict type="erroneous gene model prediction">
        <sequence resource="EMBL-CDS" id="AAC62807"/>
    </conflict>
</comment>
<comment type="sequence caution" evidence="10">
    <conflict type="erroneous gene model prediction">
        <sequence resource="EMBL-CDS" id="CAB39784"/>
    </conflict>
</comment>
<comment type="sequence caution" evidence="10">
    <conflict type="erroneous gene model prediction">
        <sequence resource="EMBL-CDS" id="CAB78154"/>
    </conflict>
</comment>
<name>HKT1_ARATH</name>
<dbReference type="EMBL" id="AF237672">
    <property type="protein sequence ID" value="AAF68393.1"/>
    <property type="molecule type" value="mRNA"/>
</dbReference>
<dbReference type="EMBL" id="AY685182">
    <property type="protein sequence ID" value="AAT95386.1"/>
    <property type="molecule type" value="mRNA"/>
</dbReference>
<dbReference type="EMBL" id="AF096373">
    <property type="protein sequence ID" value="AAC62807.1"/>
    <property type="status" value="ALT_SEQ"/>
    <property type="molecule type" value="Genomic_DNA"/>
</dbReference>
<dbReference type="EMBL" id="AL049488">
    <property type="protein sequence ID" value="CAB39784.1"/>
    <property type="status" value="ALT_SEQ"/>
    <property type="molecule type" value="Genomic_DNA"/>
</dbReference>
<dbReference type="EMBL" id="AL161517">
    <property type="protein sequence ID" value="CAB78154.1"/>
    <property type="status" value="ALT_SEQ"/>
    <property type="molecule type" value="Genomic_DNA"/>
</dbReference>
<dbReference type="EMBL" id="CP002687">
    <property type="protein sequence ID" value="AEE82866.1"/>
    <property type="molecule type" value="Genomic_DNA"/>
</dbReference>
<dbReference type="EMBL" id="BT005751">
    <property type="protein sequence ID" value="AAO64157.1"/>
    <property type="molecule type" value="mRNA"/>
</dbReference>
<dbReference type="PIR" id="T01969">
    <property type="entry name" value="T01969"/>
</dbReference>
<dbReference type="PIR" id="T04046">
    <property type="entry name" value="T04046"/>
</dbReference>
<dbReference type="RefSeq" id="NP_567354.1">
    <property type="nucleotide sequence ID" value="NM_117099.6"/>
</dbReference>
<dbReference type="PDB" id="8W9N">
    <property type="method" value="EM"/>
    <property type="resolution" value="2.70 A"/>
    <property type="chains" value="A/B=1-506"/>
</dbReference>
<dbReference type="PDB" id="8W9O">
    <property type="method" value="EM"/>
    <property type="resolution" value="2.80 A"/>
    <property type="chains" value="A/B=1-506"/>
</dbReference>
<dbReference type="PDBsum" id="8W9N"/>
<dbReference type="PDBsum" id="8W9O"/>
<dbReference type="EMDB" id="EMD-37376"/>
<dbReference type="EMDB" id="EMD-37377"/>
<dbReference type="SMR" id="Q84TI7"/>
<dbReference type="STRING" id="3702.Q84TI7"/>
<dbReference type="TCDB" id="2.A.38.3.2">
    <property type="family name" value="the k(+) transporter (trk) family"/>
</dbReference>
<dbReference type="GlyCosmos" id="Q84TI7">
    <property type="glycosylation" value="1 site, No reported glycans"/>
</dbReference>
<dbReference type="GlyGen" id="Q84TI7">
    <property type="glycosylation" value="1 site"/>
</dbReference>
<dbReference type="iPTMnet" id="Q84TI7"/>
<dbReference type="PaxDb" id="3702-AT4G10310.1"/>
<dbReference type="ProteomicsDB" id="230397"/>
<dbReference type="EnsemblPlants" id="AT4G10310.1">
    <property type="protein sequence ID" value="AT4G10310.1"/>
    <property type="gene ID" value="AT4G10310"/>
</dbReference>
<dbReference type="GeneID" id="826623"/>
<dbReference type="Gramene" id="AT4G10310.1">
    <property type="protein sequence ID" value="AT4G10310.1"/>
    <property type="gene ID" value="AT4G10310"/>
</dbReference>
<dbReference type="KEGG" id="ath:AT4G10310"/>
<dbReference type="Araport" id="AT4G10310"/>
<dbReference type="TAIR" id="AT4G10310">
    <property type="gene designation" value="HKT1"/>
</dbReference>
<dbReference type="eggNOG" id="KOG1341">
    <property type="taxonomic scope" value="Eukaryota"/>
</dbReference>
<dbReference type="HOGENOM" id="CLU_008384_2_0_1"/>
<dbReference type="InParanoid" id="Q84TI7"/>
<dbReference type="OMA" id="LFALMMY"/>
<dbReference type="PhylomeDB" id="Q84TI7"/>
<dbReference type="BioCyc" id="MetaCyc:MONOMER-14577"/>
<dbReference type="PRO" id="PR:Q84TI7"/>
<dbReference type="Proteomes" id="UP000006548">
    <property type="component" value="Chromosome 4"/>
</dbReference>
<dbReference type="ExpressionAtlas" id="Q84TI7">
    <property type="expression patterns" value="baseline and differential"/>
</dbReference>
<dbReference type="GO" id="GO:0005886">
    <property type="term" value="C:plasma membrane"/>
    <property type="evidence" value="ECO:0000314"/>
    <property type="project" value="TAIR"/>
</dbReference>
<dbReference type="GO" id="GO:0015079">
    <property type="term" value="F:potassium ion transmembrane transporter activity"/>
    <property type="evidence" value="ECO:0007669"/>
    <property type="project" value="InterPro"/>
</dbReference>
<dbReference type="GO" id="GO:0006813">
    <property type="term" value="P:potassium ion transport"/>
    <property type="evidence" value="ECO:0000315"/>
    <property type="project" value="TAIR"/>
</dbReference>
<dbReference type="GO" id="GO:0006970">
    <property type="term" value="P:response to osmotic stress"/>
    <property type="evidence" value="ECO:0000270"/>
    <property type="project" value="TAIR"/>
</dbReference>
<dbReference type="GO" id="GO:0009651">
    <property type="term" value="P:response to salt stress"/>
    <property type="evidence" value="ECO:0000315"/>
    <property type="project" value="TAIR"/>
</dbReference>
<dbReference type="GO" id="GO:0006814">
    <property type="term" value="P:sodium ion transport"/>
    <property type="evidence" value="ECO:0000315"/>
    <property type="project" value="TAIR"/>
</dbReference>
<dbReference type="InterPro" id="IPR003445">
    <property type="entry name" value="Cat_transpt"/>
</dbReference>
<dbReference type="InterPro" id="IPR004773">
    <property type="entry name" value="K/Na_transp_Trk1/HKT1"/>
</dbReference>
<dbReference type="InterPro" id="IPR051143">
    <property type="entry name" value="TrkH_K-transport"/>
</dbReference>
<dbReference type="NCBIfam" id="TIGR00934">
    <property type="entry name" value="2a38euk"/>
    <property type="match status" value="1"/>
</dbReference>
<dbReference type="PANTHER" id="PTHR31064:SF30">
    <property type="entry name" value="HIGH-AFFINITY POTASSIUM TRANSPORT PROTEIN-RELATED"/>
    <property type="match status" value="1"/>
</dbReference>
<dbReference type="PANTHER" id="PTHR31064">
    <property type="entry name" value="POTASSIUM TRANSPORT PROTEIN DDB_G0292412-RELATED"/>
    <property type="match status" value="1"/>
</dbReference>
<dbReference type="Pfam" id="PF02386">
    <property type="entry name" value="TrkH"/>
    <property type="match status" value="1"/>
</dbReference>
<feature type="chain" id="PRO_0000070465" description="Sodium transporter HKT1">
    <location>
        <begin position="1"/>
        <end position="506"/>
    </location>
</feature>
<feature type="topological domain" description="Cytoplasmic" evidence="1">
    <location>
        <begin position="1"/>
        <end position="19"/>
    </location>
</feature>
<feature type="transmembrane region" description="Helical; Name=1" evidence="1">
    <location>
        <begin position="20"/>
        <end position="40"/>
    </location>
</feature>
<feature type="topological domain" description="Extracellular" evidence="1">
    <location>
        <begin position="41"/>
        <end position="81"/>
    </location>
</feature>
<feature type="transmembrane region" description="Helical; Name=2" evidence="1">
    <location>
        <begin position="82"/>
        <end position="102"/>
    </location>
</feature>
<feature type="topological domain" description="Cytoplasmic" evidence="1">
    <location>
        <begin position="103"/>
        <end position="159"/>
    </location>
</feature>
<feature type="transmembrane region" description="Helical; Name=3" evidence="1">
    <location>
        <begin position="160"/>
        <end position="180"/>
    </location>
</feature>
<feature type="topological domain" description="Extracellular" evidence="1">
    <location>
        <begin position="181"/>
        <end position="232"/>
    </location>
</feature>
<feature type="transmembrane region" description="Helical; Name=4" evidence="1">
    <location>
        <begin position="233"/>
        <end position="253"/>
    </location>
</feature>
<feature type="topological domain" description="Cytoplasmic" evidence="1">
    <location>
        <begin position="254"/>
        <end position="286"/>
    </location>
</feature>
<feature type="transmembrane region" description="Helical; Name=5" evidence="1">
    <location>
        <begin position="287"/>
        <end position="307"/>
    </location>
</feature>
<feature type="topological domain" description="Extracellular" evidence="1">
    <location>
        <begin position="308"/>
        <end position="348"/>
    </location>
</feature>
<feature type="transmembrane region" description="Helical; Name=6" evidence="1">
    <location>
        <begin position="349"/>
        <end position="369"/>
    </location>
</feature>
<feature type="topological domain" description="Cytoplasmic" evidence="1">
    <location>
        <begin position="370"/>
        <end position="392"/>
    </location>
</feature>
<feature type="transmembrane region" description="Helical; Name=7" evidence="1">
    <location>
        <begin position="393"/>
        <end position="413"/>
    </location>
</feature>
<feature type="topological domain" description="Extracellular" evidence="1">
    <location>
        <begin position="414"/>
        <end position="465"/>
    </location>
</feature>
<feature type="transmembrane region" description="Helical; Name=8" evidence="1">
    <location>
        <begin position="466"/>
        <end position="486"/>
    </location>
</feature>
<feature type="topological domain" description="Cytoplasmic" evidence="1">
    <location>
        <begin position="487"/>
        <end position="506"/>
    </location>
</feature>
<feature type="glycosylation site" description="N-linked (GlcNAc...) asparagine" evidence="3">
    <location>
        <position position="429"/>
    </location>
</feature>
<feature type="mutagenesis site" description="Gives some permeability to potassium." evidence="5">
    <original>S</original>
    <variation>G</variation>
    <location>
        <position position="68"/>
    </location>
</feature>
<feature type="mutagenesis site" description="Does not create a new N-glycosylation site; when associated with Q-429." evidence="3">
    <original>E</original>
    <variation>N</variation>
    <location>
        <position position="194"/>
    </location>
</feature>
<feature type="mutagenesis site" description="Creates a new N-glycosylation site." evidence="3">
    <original>G</original>
    <variation>S</variation>
    <location>
        <position position="213"/>
    </location>
</feature>
<feature type="mutagenesis site" description="In sas2-1; induces a strong decrease in sodium in the phloem sap leading to sodium accumulation in aerial organs." evidence="7">
    <original>S</original>
    <variation>L</variation>
    <location>
        <position position="282"/>
    </location>
</feature>
<feature type="mutagenesis site" description="In sas2-2; induces increased sensitivity to salt." evidence="7">
    <original>G</original>
    <variation>E</variation>
    <location>
        <position position="325"/>
    </location>
</feature>
<feature type="mutagenesis site" description="Loss of N-glycosylation. no effect on function. Does not create a new N-glycosylation site; when associated with N-194." evidence="3">
    <original>N</original>
    <variation>Q</variation>
    <location>
        <position position="429"/>
    </location>
</feature>
<feature type="mutagenesis site" description="Compensate the N-glycosylation site; when associated with Q-429." evidence="3">
    <original>F</original>
    <variation>N</variation>
    <location>
        <position position="443"/>
    </location>
</feature>
<feature type="sequence conflict" description="In Ref. 2; AAT95386." evidence="10" ref="2">
    <original>K</original>
    <variation>R</variation>
    <location>
        <position position="148"/>
    </location>
</feature>
<feature type="sequence conflict" description="In Ref. 2; AAT95386." evidence="10" ref="2">
    <original>K</original>
    <variation>E</variation>
    <location>
        <position position="388"/>
    </location>
</feature>
<feature type="sequence conflict" description="In Ref. 2; AAT95386." evidence="10" ref="2">
    <original>Y</original>
    <variation>H</variation>
    <location>
        <position position="438"/>
    </location>
</feature>
<feature type="sequence conflict" description="In Ref. 1; AAF68393." evidence="10" ref="1">
    <original>V</original>
    <variation>L</variation>
    <location>
        <position position="453"/>
    </location>
</feature>
<feature type="sequence conflict" description="In Ref. 1; AAF68393." evidence="10" ref="1">
    <original>A</original>
    <variation>V</variation>
    <location>
        <position position="493"/>
    </location>
</feature>
<feature type="helix" evidence="11">
    <location>
        <begin position="22"/>
        <end position="43"/>
    </location>
</feature>
<feature type="strand" evidence="11">
    <location>
        <begin position="46"/>
        <end position="49"/>
    </location>
</feature>
<feature type="helix" evidence="11">
    <location>
        <begin position="53"/>
        <end position="64"/>
    </location>
</feature>
<feature type="helix" evidence="11">
    <location>
        <begin position="74"/>
        <end position="76"/>
    </location>
</feature>
<feature type="helix" evidence="11">
    <location>
        <begin position="79"/>
        <end position="91"/>
    </location>
</feature>
<feature type="helix" evidence="11">
    <location>
        <begin position="94"/>
        <end position="107"/>
    </location>
</feature>
<feature type="turn" evidence="11">
    <location>
        <begin position="108"/>
        <end position="110"/>
    </location>
</feature>
<feature type="helix" evidence="11">
    <location>
        <begin position="149"/>
        <end position="182"/>
    </location>
</feature>
<feature type="helix" evidence="11">
    <location>
        <begin position="184"/>
        <end position="193"/>
    </location>
</feature>
<feature type="helix" evidence="11">
    <location>
        <begin position="197"/>
        <end position="209"/>
    </location>
</feature>
<feature type="strand" evidence="11">
    <location>
        <begin position="216"/>
        <end position="219"/>
    </location>
</feature>
<feature type="helix" evidence="11">
    <location>
        <begin position="221"/>
        <end position="224"/>
    </location>
</feature>
<feature type="helix" evidence="11">
    <location>
        <begin position="228"/>
        <end position="241"/>
    </location>
</feature>
<feature type="turn" evidence="11">
    <location>
        <begin position="242"/>
        <end position="244"/>
    </location>
</feature>
<feature type="helix" evidence="11">
    <location>
        <begin position="245"/>
        <end position="259"/>
    </location>
</feature>
<feature type="helix" evidence="11">
    <location>
        <begin position="263"/>
        <end position="270"/>
    </location>
</feature>
<feature type="helix" evidence="11">
    <location>
        <begin position="272"/>
        <end position="275"/>
    </location>
</feature>
<feature type="helix" evidence="11">
    <location>
        <begin position="283"/>
        <end position="307"/>
    </location>
</feature>
<feature type="turn" evidence="11">
    <location>
        <begin position="313"/>
        <end position="316"/>
    </location>
</feature>
<feature type="helix" evidence="11">
    <location>
        <begin position="319"/>
        <end position="333"/>
    </location>
</feature>
<feature type="turn" evidence="11">
    <location>
        <begin position="334"/>
        <end position="336"/>
    </location>
</feature>
<feature type="helix" evidence="11">
    <location>
        <begin position="343"/>
        <end position="345"/>
    </location>
</feature>
<feature type="helix" evidence="11">
    <location>
        <begin position="348"/>
        <end position="359"/>
    </location>
</feature>
<feature type="helix" evidence="11">
    <location>
        <begin position="399"/>
        <end position="413"/>
    </location>
</feature>
<feature type="helix" evidence="11">
    <location>
        <begin position="415"/>
        <end position="420"/>
    </location>
</feature>
<feature type="turn" evidence="11">
    <location>
        <begin position="422"/>
        <end position="424"/>
    </location>
</feature>
<feature type="helix" evidence="11">
    <location>
        <begin position="427"/>
        <end position="439"/>
    </location>
</feature>
<feature type="helix" evidence="11">
    <location>
        <begin position="449"/>
        <end position="451"/>
    </location>
</feature>
<feature type="helix" evidence="11">
    <location>
        <begin position="455"/>
        <end position="457"/>
    </location>
</feature>
<feature type="helix" evidence="11">
    <location>
        <begin position="467"/>
        <end position="470"/>
    </location>
</feature>
<feature type="helix" evidence="11">
    <location>
        <begin position="473"/>
        <end position="487"/>
    </location>
</feature>
<feature type="helix" evidence="11">
    <location>
        <begin position="489"/>
        <end position="491"/>
    </location>
</feature>
<feature type="strand" evidence="11">
    <location>
        <begin position="499"/>
        <end position="501"/>
    </location>
</feature>
<keyword id="KW-0002">3D-structure</keyword>
<keyword id="KW-1003">Cell membrane</keyword>
<keyword id="KW-0325">Glycoprotein</keyword>
<keyword id="KW-0406">Ion transport</keyword>
<keyword id="KW-0472">Membrane</keyword>
<keyword id="KW-0630">Potassium</keyword>
<keyword id="KW-0633">Potassium transport</keyword>
<keyword id="KW-1185">Reference proteome</keyword>
<keyword id="KW-0915">Sodium</keyword>
<keyword id="KW-0739">Sodium transport</keyword>
<keyword id="KW-0812">Transmembrane</keyword>
<keyword id="KW-1133">Transmembrane helix</keyword>
<keyword id="KW-0813">Transport</keyword>
<accession>Q84TI7</accession>
<accession>O82614</accession>
<accession>Q68KI5</accession>
<accession>Q9M570</accession>
<accession>Q9SV90</accession>
<protein>
    <recommendedName>
        <fullName>Sodium transporter HKT1</fullName>
        <shortName>AtHKT1</shortName>
    </recommendedName>
</protein>
<proteinExistence type="evidence at protein level"/>